<proteinExistence type="inferred from homology"/>
<name>YF2C_SCHPO</name>
<evidence type="ECO:0000255" key="1">
    <source>
        <dbReference type="PROSITE-ProRule" id="PRU00175"/>
    </source>
</evidence>
<evidence type="ECO:0000255" key="2">
    <source>
        <dbReference type="PROSITE-ProRule" id="PRU00541"/>
    </source>
</evidence>
<evidence type="ECO:0000255" key="3">
    <source>
        <dbReference type="PROSITE-ProRule" id="PRU00542"/>
    </source>
</evidence>
<evidence type="ECO:0000256" key="4">
    <source>
        <dbReference type="SAM" id="MobiDB-lite"/>
    </source>
</evidence>
<evidence type="ECO:0000269" key="5">
    <source>
    </source>
</evidence>
<evidence type="ECO:0000305" key="6"/>
<protein>
    <recommendedName>
        <fullName>Uncharacterized ATP-dependent helicase C17A2.12</fullName>
        <ecNumber>3.6.4.-</ecNumber>
    </recommendedName>
</protein>
<reference key="1">
    <citation type="journal article" date="2002" name="Nature">
        <title>The genome sequence of Schizosaccharomyces pombe.</title>
        <authorList>
            <person name="Wood V."/>
            <person name="Gwilliam R."/>
            <person name="Rajandream M.A."/>
            <person name="Lyne M.H."/>
            <person name="Lyne R."/>
            <person name="Stewart A."/>
            <person name="Sgouros J.G."/>
            <person name="Peat N."/>
            <person name="Hayles J."/>
            <person name="Baker S.G."/>
            <person name="Basham D."/>
            <person name="Bowman S."/>
            <person name="Brooks K."/>
            <person name="Brown D."/>
            <person name="Brown S."/>
            <person name="Chillingworth T."/>
            <person name="Churcher C.M."/>
            <person name="Collins M."/>
            <person name="Connor R."/>
            <person name="Cronin A."/>
            <person name="Davis P."/>
            <person name="Feltwell T."/>
            <person name="Fraser A."/>
            <person name="Gentles S."/>
            <person name="Goble A."/>
            <person name="Hamlin N."/>
            <person name="Harris D.E."/>
            <person name="Hidalgo J."/>
            <person name="Hodgson G."/>
            <person name="Holroyd S."/>
            <person name="Hornsby T."/>
            <person name="Howarth S."/>
            <person name="Huckle E.J."/>
            <person name="Hunt S."/>
            <person name="Jagels K."/>
            <person name="James K.D."/>
            <person name="Jones L."/>
            <person name="Jones M."/>
            <person name="Leather S."/>
            <person name="McDonald S."/>
            <person name="McLean J."/>
            <person name="Mooney P."/>
            <person name="Moule S."/>
            <person name="Mungall K.L."/>
            <person name="Murphy L.D."/>
            <person name="Niblett D."/>
            <person name="Odell C."/>
            <person name="Oliver K."/>
            <person name="O'Neil S."/>
            <person name="Pearson D."/>
            <person name="Quail M.A."/>
            <person name="Rabbinowitsch E."/>
            <person name="Rutherford K.M."/>
            <person name="Rutter S."/>
            <person name="Saunders D."/>
            <person name="Seeger K."/>
            <person name="Sharp S."/>
            <person name="Skelton J."/>
            <person name="Simmonds M.N."/>
            <person name="Squares R."/>
            <person name="Squares S."/>
            <person name="Stevens K."/>
            <person name="Taylor K."/>
            <person name="Taylor R.G."/>
            <person name="Tivey A."/>
            <person name="Walsh S.V."/>
            <person name="Warren T."/>
            <person name="Whitehead S."/>
            <person name="Woodward J.R."/>
            <person name="Volckaert G."/>
            <person name="Aert R."/>
            <person name="Robben J."/>
            <person name="Grymonprez B."/>
            <person name="Weltjens I."/>
            <person name="Vanstreels E."/>
            <person name="Rieger M."/>
            <person name="Schaefer M."/>
            <person name="Mueller-Auer S."/>
            <person name="Gabel C."/>
            <person name="Fuchs M."/>
            <person name="Duesterhoeft A."/>
            <person name="Fritzc C."/>
            <person name="Holzer E."/>
            <person name="Moestl D."/>
            <person name="Hilbert H."/>
            <person name="Borzym K."/>
            <person name="Langer I."/>
            <person name="Beck A."/>
            <person name="Lehrach H."/>
            <person name="Reinhardt R."/>
            <person name="Pohl T.M."/>
            <person name="Eger P."/>
            <person name="Zimmermann W."/>
            <person name="Wedler H."/>
            <person name="Wambutt R."/>
            <person name="Purnelle B."/>
            <person name="Goffeau A."/>
            <person name="Cadieu E."/>
            <person name="Dreano S."/>
            <person name="Gloux S."/>
            <person name="Lelaure V."/>
            <person name="Mottier S."/>
            <person name="Galibert F."/>
            <person name="Aves S.J."/>
            <person name="Xiang Z."/>
            <person name="Hunt C."/>
            <person name="Moore K."/>
            <person name="Hurst S.M."/>
            <person name="Lucas M."/>
            <person name="Rochet M."/>
            <person name="Gaillardin C."/>
            <person name="Tallada V.A."/>
            <person name="Garzon A."/>
            <person name="Thode G."/>
            <person name="Daga R.R."/>
            <person name="Cruzado L."/>
            <person name="Jimenez J."/>
            <person name="Sanchez M."/>
            <person name="del Rey F."/>
            <person name="Benito J."/>
            <person name="Dominguez A."/>
            <person name="Revuelta J.L."/>
            <person name="Moreno S."/>
            <person name="Armstrong J."/>
            <person name="Forsburg S.L."/>
            <person name="Cerutti L."/>
            <person name="Lowe T."/>
            <person name="McCombie W.R."/>
            <person name="Paulsen I."/>
            <person name="Potashkin J."/>
            <person name="Shpakovski G.V."/>
            <person name="Ussery D."/>
            <person name="Barrell B.G."/>
            <person name="Nurse P."/>
        </authorList>
    </citation>
    <scope>NUCLEOTIDE SEQUENCE [LARGE SCALE GENOMIC DNA]</scope>
    <source>
        <strain>972 / ATCC 24843</strain>
    </source>
</reference>
<reference key="2">
    <citation type="journal article" date="2006" name="Nat. Biotechnol.">
        <title>ORFeome cloning and global analysis of protein localization in the fission yeast Schizosaccharomyces pombe.</title>
        <authorList>
            <person name="Matsuyama A."/>
            <person name="Arai R."/>
            <person name="Yashiroda Y."/>
            <person name="Shirai A."/>
            <person name="Kamata A."/>
            <person name="Sekido S."/>
            <person name="Kobayashi Y."/>
            <person name="Hashimoto A."/>
            <person name="Hamamoto M."/>
            <person name="Hiraoka Y."/>
            <person name="Horinouchi S."/>
            <person name="Yoshida M."/>
        </authorList>
    </citation>
    <scope>SUBCELLULAR LOCATION [LARGE SCALE ANALYSIS]</scope>
</reference>
<comment type="subcellular location">
    <subcellularLocation>
        <location evidence="5">Cytoplasm</location>
    </subcellularLocation>
    <subcellularLocation>
        <location evidence="5">Nucleus</location>
    </subcellularLocation>
</comment>
<comment type="similarity">
    <text evidence="6">Belongs to the SNF2/RAD54 helicase family.</text>
</comment>
<organism>
    <name type="scientific">Schizosaccharomyces pombe (strain 972 / ATCC 24843)</name>
    <name type="common">Fission yeast</name>
    <dbReference type="NCBI Taxonomy" id="284812"/>
    <lineage>
        <taxon>Eukaryota</taxon>
        <taxon>Fungi</taxon>
        <taxon>Dikarya</taxon>
        <taxon>Ascomycota</taxon>
        <taxon>Taphrinomycotina</taxon>
        <taxon>Schizosaccharomycetes</taxon>
        <taxon>Schizosaccharomycetales</taxon>
        <taxon>Schizosaccharomycetaceae</taxon>
        <taxon>Schizosaccharomyces</taxon>
    </lineage>
</organism>
<sequence length="897" mass="101376">MDSLSAYPPQSTFQQLQNDEELARRLQDEWNSSSPSSAPSSSSSQNQVELDEQFARSLQNSQSSSYSLPPFDHPPSKNPTSSSLSTRKRWRQKRLWSFKNFPFRPPTRLTSTPSNSSSLPSIPSSSSTPSISSIPHTTSSVSNDIPSVLGSSDHPIDLDNPEHLTPPSSFITAKQLSRLPTPLPPPSSSSLPTGTISTNSFCPYERKVQPEHVTKELHQLLQHNTPSPFDTIDLQLKNEQVQSAGLLVSLLPHQVEGHAWMESMEQSSKCGGVMADDMGLGKTIQTIALLLTQKSQDPLRKTNLIVVSVALLHQWAEELSTKVHPSKKLSVYIHHGSTKKNLDSYELSQYDVVLTTYSMLAYEMKQNDAFNNNNPATATPPPACSLLETSWYRIVLDEAHTIRNRDTLAAKCCVKLDAKYRWCLSGTPIQNHIDEFYSLLKFLRIKPYCVWSLFAKDISRPLKSYRADIVEAALKRLRILLASTVFRRTKETRVNNLPIVNLPPKTIRTVSVNLLPEERALYNEQMSSAQSLVDNYFNNDHDLSRYGFLLVSLLRLRQFCCHPWLVKSSSLDNSFRIRDSENVRNACKSLDPLTIERIATLQDFNCSVCLDPCLAPVFIIPCGHFTCQECMSMLVGQKYGSSSTSTIIAKCPMCRGNIVQDSLVDATILQAIHGPLNSLKQLELDMNQSFSEQESIKLRWENRIDQMFTKKFGKRASEWKSSSKLNQARQTILDIIGSKRNEKILVYSQFSQYLCLVSHMLKLENIRHVRYDGTMSANQRQKSLHSFNNDKDVLVMLVSLKAGSVGLNLTIANHVILQEPFYNPSIEDQAIDRVHRLGQQKPVTVYRFITKDTIEERIVSVQRKKRQLVKEALDSNENNPLSRLDKEELLYLFGLNS</sequence>
<accession>O13762</accession>
<feature type="chain" id="PRO_0000310749" description="Uncharacterized ATP-dependent helicase C17A2.12">
    <location>
        <begin position="1"/>
        <end position="897"/>
    </location>
</feature>
<feature type="domain" description="Helicase ATP-binding" evidence="2">
    <location>
        <begin position="263"/>
        <end position="446"/>
    </location>
</feature>
<feature type="domain" description="Helicase C-terminal" evidence="3">
    <location>
        <begin position="727"/>
        <end position="890"/>
    </location>
</feature>
<feature type="zinc finger region" description="RING-type" evidence="1">
    <location>
        <begin position="606"/>
        <end position="655"/>
    </location>
</feature>
<feature type="region of interest" description="Disordered" evidence="4">
    <location>
        <begin position="25"/>
        <end position="89"/>
    </location>
</feature>
<feature type="region of interest" description="Disordered" evidence="4">
    <location>
        <begin position="106"/>
        <end position="168"/>
    </location>
</feature>
<feature type="short sequence motif" description="DEAH box">
    <location>
        <begin position="397"/>
        <end position="400"/>
    </location>
</feature>
<feature type="compositionally biased region" description="Low complexity" evidence="4">
    <location>
        <begin position="32"/>
        <end position="44"/>
    </location>
</feature>
<feature type="compositionally biased region" description="Low complexity" evidence="4">
    <location>
        <begin position="57"/>
        <end position="68"/>
    </location>
</feature>
<feature type="compositionally biased region" description="Low complexity" evidence="4">
    <location>
        <begin position="106"/>
        <end position="142"/>
    </location>
</feature>
<feature type="binding site" evidence="2">
    <location>
        <begin position="276"/>
        <end position="283"/>
    </location>
    <ligand>
        <name>ATP</name>
        <dbReference type="ChEBI" id="CHEBI:30616"/>
    </ligand>
</feature>
<keyword id="KW-0067">ATP-binding</keyword>
<keyword id="KW-0963">Cytoplasm</keyword>
<keyword id="KW-0347">Helicase</keyword>
<keyword id="KW-0378">Hydrolase</keyword>
<keyword id="KW-0479">Metal-binding</keyword>
<keyword id="KW-0547">Nucleotide-binding</keyword>
<keyword id="KW-0539">Nucleus</keyword>
<keyword id="KW-1185">Reference proteome</keyword>
<keyword id="KW-0862">Zinc</keyword>
<keyword id="KW-0863">Zinc-finger</keyword>
<gene>
    <name type="ORF">SPAC17A2.12</name>
</gene>
<dbReference type="EC" id="3.6.4.-"/>
<dbReference type="EMBL" id="CU329670">
    <property type="protein sequence ID" value="CAB16565.1"/>
    <property type="molecule type" value="Genomic_DNA"/>
</dbReference>
<dbReference type="PIR" id="T37813">
    <property type="entry name" value="T37813"/>
</dbReference>
<dbReference type="SMR" id="O13762"/>
<dbReference type="BioGRID" id="278902">
    <property type="interactions" value="41"/>
</dbReference>
<dbReference type="FunCoup" id="O13762">
    <property type="interactions" value="373"/>
</dbReference>
<dbReference type="STRING" id="284812.O13762"/>
<dbReference type="iPTMnet" id="O13762"/>
<dbReference type="PaxDb" id="4896-SPAC17A2.12.1"/>
<dbReference type="EnsemblFungi" id="SPAC17A2.12.1">
    <property type="protein sequence ID" value="SPAC17A2.12.1:pep"/>
    <property type="gene ID" value="SPAC17A2.12"/>
</dbReference>
<dbReference type="KEGG" id="spo:2542440"/>
<dbReference type="PomBase" id="SPAC17A2.12"/>
<dbReference type="VEuPathDB" id="FungiDB:SPAC17A2.12"/>
<dbReference type="eggNOG" id="KOG1001">
    <property type="taxonomic scope" value="Eukaryota"/>
</dbReference>
<dbReference type="HOGENOM" id="CLU_000315_2_0_1"/>
<dbReference type="InParanoid" id="O13762"/>
<dbReference type="OMA" id="YSQFSQY"/>
<dbReference type="PhylomeDB" id="O13762"/>
<dbReference type="PRO" id="PR:O13762"/>
<dbReference type="Proteomes" id="UP000002485">
    <property type="component" value="Chromosome I"/>
</dbReference>
<dbReference type="GO" id="GO:0000785">
    <property type="term" value="C:chromatin"/>
    <property type="evidence" value="ECO:0000266"/>
    <property type="project" value="PomBase"/>
</dbReference>
<dbReference type="GO" id="GO:0005737">
    <property type="term" value="C:cytoplasm"/>
    <property type="evidence" value="ECO:0000314"/>
    <property type="project" value="PomBase"/>
</dbReference>
<dbReference type="GO" id="GO:0005829">
    <property type="term" value="C:cytosol"/>
    <property type="evidence" value="ECO:0007005"/>
    <property type="project" value="PomBase"/>
</dbReference>
<dbReference type="GO" id="GO:0005634">
    <property type="term" value="C:nucleus"/>
    <property type="evidence" value="ECO:0000314"/>
    <property type="project" value="PomBase"/>
</dbReference>
<dbReference type="GO" id="GO:0035861">
    <property type="term" value="C:site of double-strand break"/>
    <property type="evidence" value="ECO:0000314"/>
    <property type="project" value="PomBase"/>
</dbReference>
<dbReference type="GO" id="GO:0005524">
    <property type="term" value="F:ATP binding"/>
    <property type="evidence" value="ECO:0007669"/>
    <property type="project" value="UniProtKB-KW"/>
</dbReference>
<dbReference type="GO" id="GO:0016887">
    <property type="term" value="F:ATP hydrolysis activity"/>
    <property type="evidence" value="ECO:0000305"/>
    <property type="project" value="PomBase"/>
</dbReference>
<dbReference type="GO" id="GO:0008094">
    <property type="term" value="F:ATP-dependent activity, acting on DNA"/>
    <property type="evidence" value="ECO:0000318"/>
    <property type="project" value="GO_Central"/>
</dbReference>
<dbReference type="GO" id="GO:0004386">
    <property type="term" value="F:helicase activity"/>
    <property type="evidence" value="ECO:0007669"/>
    <property type="project" value="UniProtKB-KW"/>
</dbReference>
<dbReference type="GO" id="GO:0008270">
    <property type="term" value="F:zinc ion binding"/>
    <property type="evidence" value="ECO:0000255"/>
    <property type="project" value="PomBase"/>
</dbReference>
<dbReference type="GO" id="GO:0000724">
    <property type="term" value="P:double-strand break repair via homologous recombination"/>
    <property type="evidence" value="ECO:0000316"/>
    <property type="project" value="PomBase"/>
</dbReference>
<dbReference type="CDD" id="cd18008">
    <property type="entry name" value="DEXDc_SHPRH-like"/>
    <property type="match status" value="1"/>
</dbReference>
<dbReference type="CDD" id="cd18793">
    <property type="entry name" value="SF2_C_SNF"/>
    <property type="match status" value="1"/>
</dbReference>
<dbReference type="FunFam" id="3.30.40.10:FF:001271">
    <property type="entry name" value="Uncharacterized ATP-dependent helicase C17A2.12"/>
    <property type="match status" value="1"/>
</dbReference>
<dbReference type="FunFam" id="3.40.50.300:FF:002704">
    <property type="entry name" value="Unplaced genomic scaffold supercont1.17, whole genome shotgun sequence"/>
    <property type="match status" value="1"/>
</dbReference>
<dbReference type="Gene3D" id="3.40.50.300">
    <property type="entry name" value="P-loop containing nucleotide triphosphate hydrolases"/>
    <property type="match status" value="1"/>
</dbReference>
<dbReference type="Gene3D" id="3.40.50.10810">
    <property type="entry name" value="Tandem AAA-ATPase domain"/>
    <property type="match status" value="1"/>
</dbReference>
<dbReference type="Gene3D" id="3.30.40.10">
    <property type="entry name" value="Zinc/RING finger domain, C3HC4 (zinc finger)"/>
    <property type="match status" value="1"/>
</dbReference>
<dbReference type="InterPro" id="IPR014001">
    <property type="entry name" value="Helicase_ATP-bd"/>
</dbReference>
<dbReference type="InterPro" id="IPR001650">
    <property type="entry name" value="Helicase_C-like"/>
</dbReference>
<dbReference type="InterPro" id="IPR027417">
    <property type="entry name" value="P-loop_NTPase"/>
</dbReference>
<dbReference type="InterPro" id="IPR038718">
    <property type="entry name" value="SNF2-like_sf"/>
</dbReference>
<dbReference type="InterPro" id="IPR049730">
    <property type="entry name" value="SNF2/RAD54-like_C"/>
</dbReference>
<dbReference type="InterPro" id="IPR000330">
    <property type="entry name" value="SNF2_N"/>
</dbReference>
<dbReference type="InterPro" id="IPR050628">
    <property type="entry name" value="SNF2_RAD54_helicase_TF"/>
</dbReference>
<dbReference type="InterPro" id="IPR001841">
    <property type="entry name" value="Znf_RING"/>
</dbReference>
<dbReference type="InterPro" id="IPR013083">
    <property type="entry name" value="Znf_RING/FYVE/PHD"/>
</dbReference>
<dbReference type="PANTHER" id="PTHR45626:SF16">
    <property type="entry name" value="ATP-DEPENDENT HELICASE ULS1"/>
    <property type="match status" value="1"/>
</dbReference>
<dbReference type="PANTHER" id="PTHR45626">
    <property type="entry name" value="TRANSCRIPTION TERMINATION FACTOR 2-RELATED"/>
    <property type="match status" value="1"/>
</dbReference>
<dbReference type="Pfam" id="PF00271">
    <property type="entry name" value="Helicase_C"/>
    <property type="match status" value="1"/>
</dbReference>
<dbReference type="Pfam" id="PF00176">
    <property type="entry name" value="SNF2-rel_dom"/>
    <property type="match status" value="1"/>
</dbReference>
<dbReference type="SMART" id="SM00487">
    <property type="entry name" value="DEXDc"/>
    <property type="match status" value="1"/>
</dbReference>
<dbReference type="SMART" id="SM00490">
    <property type="entry name" value="HELICc"/>
    <property type="match status" value="1"/>
</dbReference>
<dbReference type="SMART" id="SM00184">
    <property type="entry name" value="RING"/>
    <property type="match status" value="1"/>
</dbReference>
<dbReference type="SUPFAM" id="SSF52540">
    <property type="entry name" value="P-loop containing nucleoside triphosphate hydrolases"/>
    <property type="match status" value="2"/>
</dbReference>
<dbReference type="SUPFAM" id="SSF57850">
    <property type="entry name" value="RING/U-box"/>
    <property type="match status" value="1"/>
</dbReference>
<dbReference type="PROSITE" id="PS51192">
    <property type="entry name" value="HELICASE_ATP_BIND_1"/>
    <property type="match status" value="1"/>
</dbReference>
<dbReference type="PROSITE" id="PS51194">
    <property type="entry name" value="HELICASE_CTER"/>
    <property type="match status" value="1"/>
</dbReference>
<dbReference type="PROSITE" id="PS50089">
    <property type="entry name" value="ZF_RING_2"/>
    <property type="match status" value="1"/>
</dbReference>